<protein>
    <recommendedName>
        <fullName evidence="6">Leu-contryphan-P</fullName>
    </recommendedName>
</protein>
<sequence>GCVLLPWC</sequence>
<feature type="peptide" id="PRO_0000044505" description="Leu-contryphan-P" evidence="5">
    <location>
        <begin position="1"/>
        <end position="8"/>
    </location>
</feature>
<feature type="modified residue" description="D-leucine" evidence="5">
    <location>
        <position position="4"/>
    </location>
</feature>
<feature type="disulfide bond" evidence="5">
    <location>
        <begin position="2"/>
        <end position="8"/>
    </location>
</feature>
<comment type="function">
    <text evidence="1 2 3 4">Its target is unknown, but this toxin may modulate voltage-activated calcium channels (Cav) or calcium-dependent potassium channels (KCa).</text>
</comment>
<comment type="subcellular location">
    <subcellularLocation>
        <location evidence="5">Secreted</location>
    </subcellularLocation>
</comment>
<comment type="tissue specificity">
    <text evidence="8">Expressed by the venom duct.</text>
</comment>
<comment type="domain">
    <text evidence="7">The cysteine framework is C-C.</text>
</comment>
<comment type="mass spectrometry"/>
<comment type="similarity">
    <text evidence="7">Belongs to the O2 superfamily. Contryphan family.</text>
</comment>
<dbReference type="ConoServer" id="1313">
    <property type="toxin name" value="contryphan-P [D5&gt;L]"/>
</dbReference>
<dbReference type="GO" id="GO:0005576">
    <property type="term" value="C:extracellular region"/>
    <property type="evidence" value="ECO:0007669"/>
    <property type="project" value="UniProtKB-SubCell"/>
</dbReference>
<dbReference type="GO" id="GO:0099106">
    <property type="term" value="F:ion channel regulator activity"/>
    <property type="evidence" value="ECO:0007669"/>
    <property type="project" value="UniProtKB-KW"/>
</dbReference>
<dbReference type="GO" id="GO:0090729">
    <property type="term" value="F:toxin activity"/>
    <property type="evidence" value="ECO:0007669"/>
    <property type="project" value="UniProtKB-KW"/>
</dbReference>
<dbReference type="InterPro" id="IPR011062">
    <property type="entry name" value="Contryphan_CS"/>
</dbReference>
<dbReference type="PROSITE" id="PS60027">
    <property type="entry name" value="CONTRYPHAN"/>
    <property type="match status" value="1"/>
</dbReference>
<proteinExistence type="evidence at protein level"/>
<accession>P58785</accession>
<evidence type="ECO:0000250" key="1">
    <source>
        <dbReference type="UniProtKB" id="P0C248"/>
    </source>
</evidence>
<evidence type="ECO:0000250" key="2">
    <source>
        <dbReference type="UniProtKB" id="P0C250"/>
    </source>
</evidence>
<evidence type="ECO:0000250" key="3">
    <source>
        <dbReference type="UniProtKB" id="P62903"/>
    </source>
</evidence>
<evidence type="ECO:0000250" key="4">
    <source>
        <dbReference type="UniProtKB" id="P83047"/>
    </source>
</evidence>
<evidence type="ECO:0000269" key="5">
    <source>
    </source>
</evidence>
<evidence type="ECO:0000303" key="6">
    <source>
    </source>
</evidence>
<evidence type="ECO:0000305" key="7"/>
<evidence type="ECO:0000305" key="8">
    <source>
    </source>
</evidence>
<reference key="1">
    <citation type="journal article" date="1999" name="J. Pept. Res.">
        <title>A novel D-leucine-containing Conus peptide: diverse conformational dynamics in the contryphan family.</title>
        <authorList>
            <person name="Jacobsen R.B."/>
            <person name="Jimenez E.C."/>
            <person name="De la Cruz R.G.C."/>
            <person name="Gray W.R."/>
            <person name="Cruz L.J."/>
            <person name="Olivera B.M."/>
        </authorList>
    </citation>
    <scope>PROTEIN SEQUENCE</scope>
    <scope>D-AMINO ACID AT LEU-4</scope>
    <scope>DISULFIDE BOND</scope>
    <scope>SYNTHESIS</scope>
    <scope>MASS SPECTROMETRY</scope>
    <scope>SUBCELLULAR LOCATION</scope>
    <source>
        <strain>Clipperton Island</strain>
        <tissue>Venom</tissue>
    </source>
</reference>
<name>COWL_CONPU</name>
<keyword id="KW-0208">D-amino acid</keyword>
<keyword id="KW-0903">Direct protein sequencing</keyword>
<keyword id="KW-1015">Disulfide bond</keyword>
<keyword id="KW-0872">Ion channel impairing toxin</keyword>
<keyword id="KW-0528">Neurotoxin</keyword>
<keyword id="KW-0964">Secreted</keyword>
<keyword id="KW-0800">Toxin</keyword>
<organism>
    <name type="scientific">Conus purpurascens</name>
    <name type="common">Purple cone</name>
    <dbReference type="NCBI Taxonomy" id="41690"/>
    <lineage>
        <taxon>Eukaryota</taxon>
        <taxon>Metazoa</taxon>
        <taxon>Spiralia</taxon>
        <taxon>Lophotrochozoa</taxon>
        <taxon>Mollusca</taxon>
        <taxon>Gastropoda</taxon>
        <taxon>Caenogastropoda</taxon>
        <taxon>Neogastropoda</taxon>
        <taxon>Conoidea</taxon>
        <taxon>Conidae</taxon>
        <taxon>Conus</taxon>
        <taxon>Chelyconus</taxon>
    </lineage>
</organism>